<comment type="function">
    <text evidence="1">F(1)F(0) ATP synthase produces ATP from ADP in the presence of a proton or sodium gradient. F-type ATPases consist of two structural domains, F(1) containing the extramembraneous catalytic core and F(0) containing the membrane proton channel, linked together by a central stalk and a peripheral stalk. During catalysis, ATP synthesis in the catalytic domain of F(1) is coupled via a rotary mechanism of the central stalk subunits to proton translocation.</text>
</comment>
<comment type="function">
    <text evidence="1">Key component of the F(0) channel; it plays a direct role in translocation across the membrane. A homomeric c-ring of between 10-14 subunits forms the central stalk rotor element with the F(1) delta and epsilon subunits.</text>
</comment>
<comment type="subunit">
    <text evidence="1">F-type ATPases have 2 components, F(1) - the catalytic core - and F(0) - the membrane proton channel. F(1) has five subunits: alpha(3), beta(3), gamma(1), delta(1), epsilon(1). F(0) has three main subunits: a(1), b(2) and c(10-14). The alpha and beta chains form an alternating ring which encloses part of the gamma chain. F(1) is attached to F(0) by a central stalk formed by the gamma and epsilon chains, while a peripheral stalk is formed by the delta and b chains.</text>
</comment>
<comment type="subcellular location">
    <subcellularLocation>
        <location evidence="1">Cell inner membrane</location>
        <topology evidence="1">Multi-pass membrane protein</topology>
    </subcellularLocation>
</comment>
<comment type="similarity">
    <text evidence="1">Belongs to the ATPase C chain family.</text>
</comment>
<organism>
    <name type="scientific">Campylobacter jejuni subsp. doylei (strain ATCC BAA-1458 / RM4099 / 269.97)</name>
    <dbReference type="NCBI Taxonomy" id="360109"/>
    <lineage>
        <taxon>Bacteria</taxon>
        <taxon>Pseudomonadati</taxon>
        <taxon>Campylobacterota</taxon>
        <taxon>Epsilonproteobacteria</taxon>
        <taxon>Campylobacterales</taxon>
        <taxon>Campylobacteraceae</taxon>
        <taxon>Campylobacter</taxon>
    </lineage>
</organism>
<keyword id="KW-0066">ATP synthesis</keyword>
<keyword id="KW-0997">Cell inner membrane</keyword>
<keyword id="KW-1003">Cell membrane</keyword>
<keyword id="KW-0138">CF(0)</keyword>
<keyword id="KW-0375">Hydrogen ion transport</keyword>
<keyword id="KW-0406">Ion transport</keyword>
<keyword id="KW-0446">Lipid-binding</keyword>
<keyword id="KW-0472">Membrane</keyword>
<keyword id="KW-0812">Transmembrane</keyword>
<keyword id="KW-1133">Transmembrane helix</keyword>
<keyword id="KW-0813">Transport</keyword>
<sequence>MKKFLFLLLACAAVAFAAETNAPVEQEAINVWIKAFSVLAAGLGLGVAALGGAIGMGNTAAATIAGTARNPGLGPKLMTTMFIALAMIEAQVIYALVIALIALYANPFIVLQ</sequence>
<proteinExistence type="inferred from homology"/>
<accession>A7H3B5</accession>
<evidence type="ECO:0000255" key="1">
    <source>
        <dbReference type="HAMAP-Rule" id="MF_01396"/>
    </source>
</evidence>
<name>ATPL_CAMJD</name>
<protein>
    <recommendedName>
        <fullName evidence="1">ATP synthase subunit c</fullName>
    </recommendedName>
    <alternativeName>
        <fullName evidence="1">ATP synthase F(0) sector subunit c</fullName>
    </alternativeName>
    <alternativeName>
        <fullName evidence="1">F-type ATPase subunit c</fullName>
        <shortName evidence="1">F-ATPase subunit c</shortName>
    </alternativeName>
    <alternativeName>
        <fullName evidence="1">Lipid-binding protein</fullName>
    </alternativeName>
</protein>
<gene>
    <name evidence="1" type="primary">atpE</name>
    <name type="ordered locus">JJD26997_0878</name>
</gene>
<dbReference type="EMBL" id="CP000768">
    <property type="protein sequence ID" value="ABS43334.1"/>
    <property type="molecule type" value="Genomic_DNA"/>
</dbReference>
<dbReference type="SMR" id="A7H3B5"/>
<dbReference type="KEGG" id="cjd:JJD26997_0878"/>
<dbReference type="HOGENOM" id="CLU_148047_0_1_7"/>
<dbReference type="Proteomes" id="UP000002302">
    <property type="component" value="Chromosome"/>
</dbReference>
<dbReference type="GO" id="GO:0005886">
    <property type="term" value="C:plasma membrane"/>
    <property type="evidence" value="ECO:0007669"/>
    <property type="project" value="UniProtKB-SubCell"/>
</dbReference>
<dbReference type="GO" id="GO:0045259">
    <property type="term" value="C:proton-transporting ATP synthase complex"/>
    <property type="evidence" value="ECO:0007669"/>
    <property type="project" value="UniProtKB-KW"/>
</dbReference>
<dbReference type="GO" id="GO:0033177">
    <property type="term" value="C:proton-transporting two-sector ATPase complex, proton-transporting domain"/>
    <property type="evidence" value="ECO:0007669"/>
    <property type="project" value="InterPro"/>
</dbReference>
<dbReference type="GO" id="GO:0008289">
    <property type="term" value="F:lipid binding"/>
    <property type="evidence" value="ECO:0007669"/>
    <property type="project" value="UniProtKB-KW"/>
</dbReference>
<dbReference type="GO" id="GO:0046933">
    <property type="term" value="F:proton-transporting ATP synthase activity, rotational mechanism"/>
    <property type="evidence" value="ECO:0007669"/>
    <property type="project" value="UniProtKB-UniRule"/>
</dbReference>
<dbReference type="CDD" id="cd18121">
    <property type="entry name" value="ATP-synt_Fo_c"/>
    <property type="match status" value="1"/>
</dbReference>
<dbReference type="FunFam" id="1.20.20.10:FF:000002">
    <property type="entry name" value="ATP synthase subunit c"/>
    <property type="match status" value="1"/>
</dbReference>
<dbReference type="Gene3D" id="1.20.20.10">
    <property type="entry name" value="F1F0 ATP synthase subunit C"/>
    <property type="match status" value="1"/>
</dbReference>
<dbReference type="HAMAP" id="MF_01396">
    <property type="entry name" value="ATP_synth_c_bact"/>
    <property type="match status" value="1"/>
</dbReference>
<dbReference type="InterPro" id="IPR005953">
    <property type="entry name" value="ATP_synth_csu_bac/chlpt"/>
</dbReference>
<dbReference type="InterPro" id="IPR000454">
    <property type="entry name" value="ATP_synth_F0_csu"/>
</dbReference>
<dbReference type="InterPro" id="IPR020537">
    <property type="entry name" value="ATP_synth_F0_csu_DDCD_BS"/>
</dbReference>
<dbReference type="InterPro" id="IPR038662">
    <property type="entry name" value="ATP_synth_F0_csu_sf"/>
</dbReference>
<dbReference type="InterPro" id="IPR002379">
    <property type="entry name" value="ATPase_proteolipid_c-like_dom"/>
</dbReference>
<dbReference type="InterPro" id="IPR035921">
    <property type="entry name" value="F/V-ATP_Csub_sf"/>
</dbReference>
<dbReference type="NCBIfam" id="TIGR01260">
    <property type="entry name" value="ATP_synt_c"/>
    <property type="match status" value="1"/>
</dbReference>
<dbReference type="NCBIfam" id="NF006295">
    <property type="entry name" value="PRK08482.1"/>
    <property type="match status" value="1"/>
</dbReference>
<dbReference type="Pfam" id="PF00137">
    <property type="entry name" value="ATP-synt_C"/>
    <property type="match status" value="1"/>
</dbReference>
<dbReference type="PRINTS" id="PR00124">
    <property type="entry name" value="ATPASEC"/>
</dbReference>
<dbReference type="SUPFAM" id="SSF81333">
    <property type="entry name" value="F1F0 ATP synthase subunit C"/>
    <property type="match status" value="1"/>
</dbReference>
<dbReference type="PROSITE" id="PS00605">
    <property type="entry name" value="ATPASE_C"/>
    <property type="match status" value="1"/>
</dbReference>
<reference key="1">
    <citation type="submission" date="2007-07" db="EMBL/GenBank/DDBJ databases">
        <title>Complete genome sequence of Campylobacter jejuni subsp doylei 269.97 isolated from human blood.</title>
        <authorList>
            <person name="Fouts D.E."/>
            <person name="Mongodin E.F."/>
            <person name="Puiu D."/>
            <person name="Sebastian Y."/>
            <person name="Miller W.G."/>
            <person name="Mandrell R.E."/>
            <person name="Lastovica A.J."/>
            <person name="Nelson K.E."/>
        </authorList>
    </citation>
    <scope>NUCLEOTIDE SEQUENCE [LARGE SCALE GENOMIC DNA]</scope>
    <source>
        <strain>ATCC BAA-1458 / RM4099 / 269.97</strain>
    </source>
</reference>
<feature type="chain" id="PRO_0000365860" description="ATP synthase subunit c">
    <location>
        <begin position="1"/>
        <end position="112"/>
    </location>
</feature>
<feature type="transmembrane region" description="Helical" evidence="1">
    <location>
        <begin position="36"/>
        <end position="56"/>
    </location>
</feature>
<feature type="transmembrane region" description="Helical" evidence="1">
    <location>
        <begin position="81"/>
        <end position="101"/>
    </location>
</feature>
<feature type="site" description="Reversibly protonated during proton transport" evidence="1">
    <location>
        <position position="89"/>
    </location>
</feature>